<proteinExistence type="inferred from homology"/>
<protein>
    <recommendedName>
        <fullName evidence="1">Alanine--tRNA ligase</fullName>
        <ecNumber evidence="1">6.1.1.7</ecNumber>
    </recommendedName>
    <alternativeName>
        <fullName evidence="1">Alanyl-tRNA synthetase</fullName>
        <shortName evidence="1">AlaRS</shortName>
    </alternativeName>
</protein>
<comment type="function">
    <text evidence="1">Catalyzes the attachment of alanine to tRNA(Ala) in a two-step reaction: alanine is first activated by ATP to form Ala-AMP and then transferred to the acceptor end of tRNA(Ala). Also edits incorrectly charged Ser-tRNA(Ala) and Gly-tRNA(Ala) via its editing domain.</text>
</comment>
<comment type="catalytic activity">
    <reaction evidence="1">
        <text>tRNA(Ala) + L-alanine + ATP = L-alanyl-tRNA(Ala) + AMP + diphosphate</text>
        <dbReference type="Rhea" id="RHEA:12540"/>
        <dbReference type="Rhea" id="RHEA-COMP:9657"/>
        <dbReference type="Rhea" id="RHEA-COMP:9923"/>
        <dbReference type="ChEBI" id="CHEBI:30616"/>
        <dbReference type="ChEBI" id="CHEBI:33019"/>
        <dbReference type="ChEBI" id="CHEBI:57972"/>
        <dbReference type="ChEBI" id="CHEBI:78442"/>
        <dbReference type="ChEBI" id="CHEBI:78497"/>
        <dbReference type="ChEBI" id="CHEBI:456215"/>
        <dbReference type="EC" id="6.1.1.7"/>
    </reaction>
</comment>
<comment type="cofactor">
    <cofactor evidence="1">
        <name>Zn(2+)</name>
        <dbReference type="ChEBI" id="CHEBI:29105"/>
    </cofactor>
    <text evidence="1">Binds 1 zinc ion per subunit.</text>
</comment>
<comment type="subcellular location">
    <subcellularLocation>
        <location evidence="1">Cytoplasm</location>
    </subcellularLocation>
</comment>
<comment type="domain">
    <text evidence="1">Consists of three domains; the N-terminal catalytic domain, the editing domain and the C-terminal C-Ala domain. The editing domain removes incorrectly charged amino acids, while the C-Ala domain, along with tRNA(Ala), serves as a bridge to cooperatively bring together the editing and aminoacylation centers thus stimulating deacylation of misacylated tRNAs.</text>
</comment>
<comment type="similarity">
    <text evidence="1">Belongs to the class-II aminoacyl-tRNA synthetase family.</text>
</comment>
<gene>
    <name evidence="1" type="primary">alaS</name>
    <name type="ordered locus">Saro_1279</name>
</gene>
<organism>
    <name type="scientific">Novosphingobium aromaticivorans (strain ATCC 700278 / DSM 12444 / CCUG 56034 / CIP 105152 / NBRC 16084 / F199)</name>
    <dbReference type="NCBI Taxonomy" id="279238"/>
    <lineage>
        <taxon>Bacteria</taxon>
        <taxon>Pseudomonadati</taxon>
        <taxon>Pseudomonadota</taxon>
        <taxon>Alphaproteobacteria</taxon>
        <taxon>Sphingomonadales</taxon>
        <taxon>Sphingomonadaceae</taxon>
        <taxon>Novosphingobium</taxon>
    </lineage>
</organism>
<feature type="chain" id="PRO_0000347705" description="Alanine--tRNA ligase">
    <location>
        <begin position="1"/>
        <end position="881"/>
    </location>
</feature>
<feature type="binding site" evidence="1">
    <location>
        <position position="565"/>
    </location>
    <ligand>
        <name>Zn(2+)</name>
        <dbReference type="ChEBI" id="CHEBI:29105"/>
    </ligand>
</feature>
<feature type="binding site" evidence="1">
    <location>
        <position position="569"/>
    </location>
    <ligand>
        <name>Zn(2+)</name>
        <dbReference type="ChEBI" id="CHEBI:29105"/>
    </ligand>
</feature>
<feature type="binding site" evidence="1">
    <location>
        <position position="672"/>
    </location>
    <ligand>
        <name>Zn(2+)</name>
        <dbReference type="ChEBI" id="CHEBI:29105"/>
    </ligand>
</feature>
<feature type="binding site" evidence="1">
    <location>
        <position position="676"/>
    </location>
    <ligand>
        <name>Zn(2+)</name>
        <dbReference type="ChEBI" id="CHEBI:29105"/>
    </ligand>
</feature>
<name>SYA_NOVAD</name>
<accession>Q2G8V0</accession>
<sequence length="881" mass="94411">MTSTNEIRRSFLEYFGSNGHDVVPSAPLVPYNDPTLMFTNAGMVPFKNVFTGLETRAVPRATSSQKCVRAGGKHNDLDNVGYTARHHTFFEMLGNFSFGDYFKEQAITHAWTLLTREWGLPKDKLLATVYHTDDEAFELWKKIAGLPEDRIIRIATKDNFWAMGDDGPCGPCSEIFFDHGDHIWGGPPGSPDEDGDRFIEIWNLVFMQFEQTAGEITGSLPKPSIDTGMGLERIAAVLQGEHDNYDTDTFKALIAASESLTSVRAEGDHKASHRVIADHLRSTSFLLADGVLPSNEGRGYVLRRIMRRAMRHAHLLGAKDPLMHRLVPALVAEMGAAYPELGRAQPLIEETLLREEVQFRRTLSNGIKLLDEATATLGEGDKLPGDTAFKLYDTYGFPYDLTEDALRARGIAVDREGFDAAMAQQKAAARAAWKGSGQAADSEVWFDIAERVGATEFTGYTATTGEAQVVALVKDGKEVDSAMAGDDVAVIVNQTPFYGESGGQTGDAGTITGGDGLVLAVSDTAKPLGRLHAHNAKVQSGSVKVGDVVRLDIDVARRDAIRANHSATHLLHAALRHRLGAHVTQKGSLVAADRLRFDFSHPTALSAEDIAAIEAEVNAEIRANEVVTTRLMSPEDAIEAGAMALFGEKYGDEVRVLSMGRVADKHYSVELCGGTHVRALGDIGVFRIVSESAVSSGVRRIEALTGEGARQWFVAREDALKNTASILRTTPEDVEARVTALMDERKKLERELAEAKKALALGGGSAKAENADEDVNGVKFSGQVLEGLDPKDLRGLLDQAKQRLGSGVAVIVAVNEGKASIAAAVTDDLAGKVSAVDLVRAGVEALGGKGGGGRPDMAQGGGPEGSRAADAIAAARAVLTA</sequence>
<keyword id="KW-0030">Aminoacyl-tRNA synthetase</keyword>
<keyword id="KW-0067">ATP-binding</keyword>
<keyword id="KW-0963">Cytoplasm</keyword>
<keyword id="KW-0436">Ligase</keyword>
<keyword id="KW-0479">Metal-binding</keyword>
<keyword id="KW-0547">Nucleotide-binding</keyword>
<keyword id="KW-0648">Protein biosynthesis</keyword>
<keyword id="KW-1185">Reference proteome</keyword>
<keyword id="KW-0694">RNA-binding</keyword>
<keyword id="KW-0820">tRNA-binding</keyword>
<keyword id="KW-0862">Zinc</keyword>
<evidence type="ECO:0000255" key="1">
    <source>
        <dbReference type="HAMAP-Rule" id="MF_00036"/>
    </source>
</evidence>
<dbReference type="EC" id="6.1.1.7" evidence="1"/>
<dbReference type="EMBL" id="CP000248">
    <property type="protein sequence ID" value="ABD25723.1"/>
    <property type="molecule type" value="Genomic_DNA"/>
</dbReference>
<dbReference type="RefSeq" id="WP_011444937.1">
    <property type="nucleotide sequence ID" value="NC_007794.1"/>
</dbReference>
<dbReference type="SMR" id="Q2G8V0"/>
<dbReference type="STRING" id="279238.Saro_1279"/>
<dbReference type="KEGG" id="nar:Saro_1279"/>
<dbReference type="eggNOG" id="COG0013">
    <property type="taxonomic scope" value="Bacteria"/>
</dbReference>
<dbReference type="HOGENOM" id="CLU_004485_1_1_5"/>
<dbReference type="Proteomes" id="UP000009134">
    <property type="component" value="Chromosome"/>
</dbReference>
<dbReference type="GO" id="GO:0005829">
    <property type="term" value="C:cytosol"/>
    <property type="evidence" value="ECO:0007669"/>
    <property type="project" value="TreeGrafter"/>
</dbReference>
<dbReference type="GO" id="GO:0004813">
    <property type="term" value="F:alanine-tRNA ligase activity"/>
    <property type="evidence" value="ECO:0007669"/>
    <property type="project" value="UniProtKB-UniRule"/>
</dbReference>
<dbReference type="GO" id="GO:0002161">
    <property type="term" value="F:aminoacyl-tRNA deacylase activity"/>
    <property type="evidence" value="ECO:0007669"/>
    <property type="project" value="TreeGrafter"/>
</dbReference>
<dbReference type="GO" id="GO:0005524">
    <property type="term" value="F:ATP binding"/>
    <property type="evidence" value="ECO:0007669"/>
    <property type="project" value="UniProtKB-UniRule"/>
</dbReference>
<dbReference type="GO" id="GO:0000049">
    <property type="term" value="F:tRNA binding"/>
    <property type="evidence" value="ECO:0007669"/>
    <property type="project" value="UniProtKB-KW"/>
</dbReference>
<dbReference type="GO" id="GO:0008270">
    <property type="term" value="F:zinc ion binding"/>
    <property type="evidence" value="ECO:0007669"/>
    <property type="project" value="UniProtKB-UniRule"/>
</dbReference>
<dbReference type="GO" id="GO:0006419">
    <property type="term" value="P:alanyl-tRNA aminoacylation"/>
    <property type="evidence" value="ECO:0007669"/>
    <property type="project" value="UniProtKB-UniRule"/>
</dbReference>
<dbReference type="GO" id="GO:0045892">
    <property type="term" value="P:negative regulation of DNA-templated transcription"/>
    <property type="evidence" value="ECO:0007669"/>
    <property type="project" value="TreeGrafter"/>
</dbReference>
<dbReference type="CDD" id="cd00673">
    <property type="entry name" value="AlaRS_core"/>
    <property type="match status" value="1"/>
</dbReference>
<dbReference type="FunFam" id="2.40.30.130:FF:000001">
    <property type="entry name" value="Alanine--tRNA ligase"/>
    <property type="match status" value="1"/>
</dbReference>
<dbReference type="FunFam" id="3.10.310.40:FF:000001">
    <property type="entry name" value="Alanine--tRNA ligase"/>
    <property type="match status" value="1"/>
</dbReference>
<dbReference type="FunFam" id="3.30.54.20:FF:000001">
    <property type="entry name" value="Alanine--tRNA ligase"/>
    <property type="match status" value="1"/>
</dbReference>
<dbReference type="FunFam" id="3.30.930.10:FF:000004">
    <property type="entry name" value="Alanine--tRNA ligase"/>
    <property type="match status" value="1"/>
</dbReference>
<dbReference type="FunFam" id="3.30.980.10:FF:000004">
    <property type="entry name" value="Alanine--tRNA ligase, cytoplasmic"/>
    <property type="match status" value="1"/>
</dbReference>
<dbReference type="Gene3D" id="2.40.30.130">
    <property type="match status" value="1"/>
</dbReference>
<dbReference type="Gene3D" id="3.10.310.40">
    <property type="match status" value="1"/>
</dbReference>
<dbReference type="Gene3D" id="3.30.54.20">
    <property type="match status" value="1"/>
</dbReference>
<dbReference type="Gene3D" id="6.10.250.550">
    <property type="match status" value="1"/>
</dbReference>
<dbReference type="Gene3D" id="3.30.930.10">
    <property type="entry name" value="Bira Bifunctional Protein, Domain 2"/>
    <property type="match status" value="1"/>
</dbReference>
<dbReference type="Gene3D" id="3.30.980.10">
    <property type="entry name" value="Threonyl-trna Synthetase, Chain A, domain 2"/>
    <property type="match status" value="1"/>
</dbReference>
<dbReference type="HAMAP" id="MF_00036_B">
    <property type="entry name" value="Ala_tRNA_synth_B"/>
    <property type="match status" value="1"/>
</dbReference>
<dbReference type="InterPro" id="IPR045864">
    <property type="entry name" value="aa-tRNA-synth_II/BPL/LPL"/>
</dbReference>
<dbReference type="InterPro" id="IPR002318">
    <property type="entry name" value="Ala-tRNA-lgiase_IIc"/>
</dbReference>
<dbReference type="InterPro" id="IPR018162">
    <property type="entry name" value="Ala-tRNA-ligase_IIc_anticod-bd"/>
</dbReference>
<dbReference type="InterPro" id="IPR018165">
    <property type="entry name" value="Ala-tRNA-synth_IIc_core"/>
</dbReference>
<dbReference type="InterPro" id="IPR018164">
    <property type="entry name" value="Ala-tRNA-synth_IIc_N"/>
</dbReference>
<dbReference type="InterPro" id="IPR050058">
    <property type="entry name" value="Ala-tRNA_ligase"/>
</dbReference>
<dbReference type="InterPro" id="IPR023033">
    <property type="entry name" value="Ala_tRNA_ligase_euk/bac"/>
</dbReference>
<dbReference type="InterPro" id="IPR003156">
    <property type="entry name" value="DHHA1_dom"/>
</dbReference>
<dbReference type="InterPro" id="IPR018163">
    <property type="entry name" value="Thr/Ala-tRNA-synth_IIc_edit"/>
</dbReference>
<dbReference type="InterPro" id="IPR009000">
    <property type="entry name" value="Transl_B-barrel_sf"/>
</dbReference>
<dbReference type="InterPro" id="IPR012947">
    <property type="entry name" value="tRNA_SAD"/>
</dbReference>
<dbReference type="NCBIfam" id="TIGR00344">
    <property type="entry name" value="alaS"/>
    <property type="match status" value="1"/>
</dbReference>
<dbReference type="PANTHER" id="PTHR11777:SF9">
    <property type="entry name" value="ALANINE--TRNA LIGASE, CYTOPLASMIC"/>
    <property type="match status" value="1"/>
</dbReference>
<dbReference type="PANTHER" id="PTHR11777">
    <property type="entry name" value="ALANYL-TRNA SYNTHETASE"/>
    <property type="match status" value="1"/>
</dbReference>
<dbReference type="Pfam" id="PF02272">
    <property type="entry name" value="DHHA1"/>
    <property type="match status" value="1"/>
</dbReference>
<dbReference type="Pfam" id="PF01411">
    <property type="entry name" value="tRNA-synt_2c"/>
    <property type="match status" value="1"/>
</dbReference>
<dbReference type="Pfam" id="PF07973">
    <property type="entry name" value="tRNA_SAD"/>
    <property type="match status" value="1"/>
</dbReference>
<dbReference type="PRINTS" id="PR00980">
    <property type="entry name" value="TRNASYNTHALA"/>
</dbReference>
<dbReference type="SMART" id="SM00863">
    <property type="entry name" value="tRNA_SAD"/>
    <property type="match status" value="1"/>
</dbReference>
<dbReference type="SUPFAM" id="SSF55681">
    <property type="entry name" value="Class II aaRS and biotin synthetases"/>
    <property type="match status" value="1"/>
</dbReference>
<dbReference type="SUPFAM" id="SSF101353">
    <property type="entry name" value="Putative anticodon-binding domain of alanyl-tRNA synthetase (AlaRS)"/>
    <property type="match status" value="1"/>
</dbReference>
<dbReference type="SUPFAM" id="SSF55186">
    <property type="entry name" value="ThrRS/AlaRS common domain"/>
    <property type="match status" value="1"/>
</dbReference>
<dbReference type="SUPFAM" id="SSF50447">
    <property type="entry name" value="Translation proteins"/>
    <property type="match status" value="1"/>
</dbReference>
<dbReference type="PROSITE" id="PS50860">
    <property type="entry name" value="AA_TRNA_LIGASE_II_ALA"/>
    <property type="match status" value="1"/>
</dbReference>
<reference key="1">
    <citation type="submission" date="2006-01" db="EMBL/GenBank/DDBJ databases">
        <title>Complete sequence of Novosphingobium aromaticivorans DSM 12444.</title>
        <authorList>
            <consortium name="US DOE Joint Genome Institute"/>
            <person name="Copeland A."/>
            <person name="Lucas S."/>
            <person name="Lapidus A."/>
            <person name="Barry K."/>
            <person name="Detter J.C."/>
            <person name="Glavina T."/>
            <person name="Hammon N."/>
            <person name="Israni S."/>
            <person name="Pitluck S."/>
            <person name="Chain P."/>
            <person name="Malfatti S."/>
            <person name="Shin M."/>
            <person name="Vergez L."/>
            <person name="Schmutz J."/>
            <person name="Larimer F."/>
            <person name="Land M."/>
            <person name="Kyrpides N."/>
            <person name="Ivanova N."/>
            <person name="Fredrickson J."/>
            <person name="Balkwill D."/>
            <person name="Romine M.F."/>
            <person name="Richardson P."/>
        </authorList>
    </citation>
    <scope>NUCLEOTIDE SEQUENCE [LARGE SCALE GENOMIC DNA]</scope>
    <source>
        <strain>ATCC 700278 / DSM 12444 / CCUG 56034 / CIP 105152 / NBRC 16084 / F199</strain>
    </source>
</reference>